<name>RS20_RENSM</name>
<dbReference type="EMBL" id="CP000910">
    <property type="protein sequence ID" value="ABY23666.1"/>
    <property type="molecule type" value="Genomic_DNA"/>
</dbReference>
<dbReference type="RefSeq" id="WP_012245336.1">
    <property type="nucleotide sequence ID" value="NC_010168.1"/>
</dbReference>
<dbReference type="SMR" id="A9WQT7"/>
<dbReference type="STRING" id="288705.RSal33209_1933"/>
<dbReference type="KEGG" id="rsa:RSal33209_1933"/>
<dbReference type="eggNOG" id="COG0268">
    <property type="taxonomic scope" value="Bacteria"/>
</dbReference>
<dbReference type="HOGENOM" id="CLU_160655_0_1_11"/>
<dbReference type="Proteomes" id="UP000002007">
    <property type="component" value="Chromosome"/>
</dbReference>
<dbReference type="GO" id="GO:0005829">
    <property type="term" value="C:cytosol"/>
    <property type="evidence" value="ECO:0007669"/>
    <property type="project" value="TreeGrafter"/>
</dbReference>
<dbReference type="GO" id="GO:0015935">
    <property type="term" value="C:small ribosomal subunit"/>
    <property type="evidence" value="ECO:0007669"/>
    <property type="project" value="TreeGrafter"/>
</dbReference>
<dbReference type="GO" id="GO:0070181">
    <property type="term" value="F:small ribosomal subunit rRNA binding"/>
    <property type="evidence" value="ECO:0007669"/>
    <property type="project" value="TreeGrafter"/>
</dbReference>
<dbReference type="GO" id="GO:0003735">
    <property type="term" value="F:structural constituent of ribosome"/>
    <property type="evidence" value="ECO:0007669"/>
    <property type="project" value="InterPro"/>
</dbReference>
<dbReference type="GO" id="GO:0006412">
    <property type="term" value="P:translation"/>
    <property type="evidence" value="ECO:0007669"/>
    <property type="project" value="UniProtKB-UniRule"/>
</dbReference>
<dbReference type="FunFam" id="1.20.58.110:FF:000001">
    <property type="entry name" value="30S ribosomal protein S20"/>
    <property type="match status" value="1"/>
</dbReference>
<dbReference type="Gene3D" id="1.20.58.110">
    <property type="entry name" value="Ribosomal protein S20"/>
    <property type="match status" value="1"/>
</dbReference>
<dbReference type="HAMAP" id="MF_00500">
    <property type="entry name" value="Ribosomal_bS20"/>
    <property type="match status" value="1"/>
</dbReference>
<dbReference type="InterPro" id="IPR002583">
    <property type="entry name" value="Ribosomal_bS20"/>
</dbReference>
<dbReference type="InterPro" id="IPR036510">
    <property type="entry name" value="Ribosomal_bS20_sf"/>
</dbReference>
<dbReference type="NCBIfam" id="TIGR00029">
    <property type="entry name" value="S20"/>
    <property type="match status" value="1"/>
</dbReference>
<dbReference type="PANTHER" id="PTHR33398">
    <property type="entry name" value="30S RIBOSOMAL PROTEIN S20"/>
    <property type="match status" value="1"/>
</dbReference>
<dbReference type="PANTHER" id="PTHR33398:SF1">
    <property type="entry name" value="SMALL RIBOSOMAL SUBUNIT PROTEIN BS20C"/>
    <property type="match status" value="1"/>
</dbReference>
<dbReference type="Pfam" id="PF01649">
    <property type="entry name" value="Ribosomal_S20p"/>
    <property type="match status" value="1"/>
</dbReference>
<dbReference type="SUPFAM" id="SSF46992">
    <property type="entry name" value="Ribosomal protein S20"/>
    <property type="match status" value="1"/>
</dbReference>
<sequence>MANIKSQKKRILTNEKARLRNNAVKSELKTAVRAVNQAVEAGNKETAGEALVHASRKLDKAVSKGVIHSNQAANRKSAISKKVSALKG</sequence>
<evidence type="ECO:0000255" key="1">
    <source>
        <dbReference type="HAMAP-Rule" id="MF_00500"/>
    </source>
</evidence>
<evidence type="ECO:0000305" key="2"/>
<keyword id="KW-1185">Reference proteome</keyword>
<keyword id="KW-0687">Ribonucleoprotein</keyword>
<keyword id="KW-0689">Ribosomal protein</keyword>
<keyword id="KW-0694">RNA-binding</keyword>
<keyword id="KW-0699">rRNA-binding</keyword>
<organism>
    <name type="scientific">Renibacterium salmoninarum (strain ATCC 33209 / DSM 20767 / JCM 11484 / NBRC 15589 / NCIMB 2235)</name>
    <dbReference type="NCBI Taxonomy" id="288705"/>
    <lineage>
        <taxon>Bacteria</taxon>
        <taxon>Bacillati</taxon>
        <taxon>Actinomycetota</taxon>
        <taxon>Actinomycetes</taxon>
        <taxon>Micrococcales</taxon>
        <taxon>Micrococcaceae</taxon>
        <taxon>Renibacterium</taxon>
    </lineage>
</organism>
<proteinExistence type="inferred from homology"/>
<reference key="1">
    <citation type="journal article" date="2008" name="J. Bacteriol.">
        <title>Genome sequence of the fish pathogen Renibacterium salmoninarum suggests reductive evolution away from an environmental Arthrobacter ancestor.</title>
        <authorList>
            <person name="Wiens G.D."/>
            <person name="Rockey D.D."/>
            <person name="Wu Z."/>
            <person name="Chang J."/>
            <person name="Levy R."/>
            <person name="Crane S."/>
            <person name="Chen D.S."/>
            <person name="Capri G.R."/>
            <person name="Burnett J.R."/>
            <person name="Sudheesh P.S."/>
            <person name="Schipma M.J."/>
            <person name="Burd H."/>
            <person name="Bhattacharyya A."/>
            <person name="Rhodes L.D."/>
            <person name="Kaul R."/>
            <person name="Strom M.S."/>
        </authorList>
    </citation>
    <scope>NUCLEOTIDE SEQUENCE [LARGE SCALE GENOMIC DNA]</scope>
    <source>
        <strain>ATCC 33209 / DSM 20767 / JCM 11484 / NBRC 15589 / NCIMB 2235</strain>
    </source>
</reference>
<gene>
    <name evidence="1" type="primary">rpsT</name>
    <name type="ordered locus">RSal33209_1933</name>
</gene>
<comment type="function">
    <text evidence="1">Binds directly to 16S ribosomal RNA.</text>
</comment>
<comment type="similarity">
    <text evidence="1">Belongs to the bacterial ribosomal protein bS20 family.</text>
</comment>
<feature type="chain" id="PRO_1000081444" description="Small ribosomal subunit protein bS20">
    <location>
        <begin position="1"/>
        <end position="88"/>
    </location>
</feature>
<accession>A9WQT7</accession>
<protein>
    <recommendedName>
        <fullName evidence="1">Small ribosomal subunit protein bS20</fullName>
    </recommendedName>
    <alternativeName>
        <fullName evidence="2">30S ribosomal protein S20</fullName>
    </alternativeName>
</protein>